<name>RS6_PSEPG</name>
<evidence type="ECO:0000255" key="1">
    <source>
        <dbReference type="HAMAP-Rule" id="MF_00360"/>
    </source>
</evidence>
<evidence type="ECO:0000256" key="2">
    <source>
        <dbReference type="SAM" id="MobiDB-lite"/>
    </source>
</evidence>
<evidence type="ECO:0000305" key="3"/>
<sequence>MRHYEIIFLVHPDQSEQVGGMVERYTKLIEEDGGKIHRLEDWGRRQLAYAINNVHKAHYVMLNVECTGKALAELEDNFRYNDAVIRNLVIRRDEAVTGQSEMLKAEENRSERRERRERPEHADSAEGDDSNDSDSSDNADE</sequence>
<dbReference type="EMBL" id="CP000926">
    <property type="protein sequence ID" value="ABZ00819.1"/>
    <property type="molecule type" value="Genomic_DNA"/>
</dbReference>
<dbReference type="RefSeq" id="WP_003249557.1">
    <property type="nucleotide sequence ID" value="NC_010322.1"/>
</dbReference>
<dbReference type="SMR" id="B0KKY3"/>
<dbReference type="GeneID" id="83682607"/>
<dbReference type="KEGG" id="ppg:PputGB1_4934"/>
<dbReference type="eggNOG" id="COG0360">
    <property type="taxonomic scope" value="Bacteria"/>
</dbReference>
<dbReference type="HOGENOM" id="CLU_113441_6_1_6"/>
<dbReference type="Proteomes" id="UP000002157">
    <property type="component" value="Chromosome"/>
</dbReference>
<dbReference type="GO" id="GO:0022627">
    <property type="term" value="C:cytosolic small ribosomal subunit"/>
    <property type="evidence" value="ECO:0007669"/>
    <property type="project" value="TreeGrafter"/>
</dbReference>
<dbReference type="GO" id="GO:0070181">
    <property type="term" value="F:small ribosomal subunit rRNA binding"/>
    <property type="evidence" value="ECO:0007669"/>
    <property type="project" value="TreeGrafter"/>
</dbReference>
<dbReference type="GO" id="GO:0003735">
    <property type="term" value="F:structural constituent of ribosome"/>
    <property type="evidence" value="ECO:0007669"/>
    <property type="project" value="InterPro"/>
</dbReference>
<dbReference type="GO" id="GO:0006412">
    <property type="term" value="P:translation"/>
    <property type="evidence" value="ECO:0007669"/>
    <property type="project" value="UniProtKB-UniRule"/>
</dbReference>
<dbReference type="CDD" id="cd00473">
    <property type="entry name" value="bS6"/>
    <property type="match status" value="1"/>
</dbReference>
<dbReference type="FunFam" id="3.30.70.60:FF:000003">
    <property type="entry name" value="30S ribosomal protein S6"/>
    <property type="match status" value="1"/>
</dbReference>
<dbReference type="Gene3D" id="3.30.70.60">
    <property type="match status" value="1"/>
</dbReference>
<dbReference type="HAMAP" id="MF_00360">
    <property type="entry name" value="Ribosomal_bS6"/>
    <property type="match status" value="1"/>
</dbReference>
<dbReference type="InterPro" id="IPR000529">
    <property type="entry name" value="Ribosomal_bS6"/>
</dbReference>
<dbReference type="InterPro" id="IPR020815">
    <property type="entry name" value="Ribosomal_bS6_CS"/>
</dbReference>
<dbReference type="InterPro" id="IPR035980">
    <property type="entry name" value="Ribosomal_bS6_sf"/>
</dbReference>
<dbReference type="InterPro" id="IPR020814">
    <property type="entry name" value="Ribosomal_S6_plastid/chlpt"/>
</dbReference>
<dbReference type="InterPro" id="IPR014717">
    <property type="entry name" value="Transl_elong_EF1B/ribsomal_bS6"/>
</dbReference>
<dbReference type="NCBIfam" id="TIGR00166">
    <property type="entry name" value="S6"/>
    <property type="match status" value="1"/>
</dbReference>
<dbReference type="PANTHER" id="PTHR21011">
    <property type="entry name" value="MITOCHONDRIAL 28S RIBOSOMAL PROTEIN S6"/>
    <property type="match status" value="1"/>
</dbReference>
<dbReference type="PANTHER" id="PTHR21011:SF1">
    <property type="entry name" value="SMALL RIBOSOMAL SUBUNIT PROTEIN BS6M"/>
    <property type="match status" value="1"/>
</dbReference>
<dbReference type="Pfam" id="PF01250">
    <property type="entry name" value="Ribosomal_S6"/>
    <property type="match status" value="1"/>
</dbReference>
<dbReference type="SUPFAM" id="SSF54995">
    <property type="entry name" value="Ribosomal protein S6"/>
    <property type="match status" value="1"/>
</dbReference>
<dbReference type="PROSITE" id="PS01048">
    <property type="entry name" value="RIBOSOMAL_S6"/>
    <property type="match status" value="1"/>
</dbReference>
<proteinExistence type="inferred from homology"/>
<keyword id="KW-0687">Ribonucleoprotein</keyword>
<keyword id="KW-0689">Ribosomal protein</keyword>
<keyword id="KW-0694">RNA-binding</keyword>
<keyword id="KW-0699">rRNA-binding</keyword>
<gene>
    <name evidence="1" type="primary">rpsF</name>
    <name type="ordered locus">PputGB1_4934</name>
</gene>
<accession>B0KKY3</accession>
<feature type="chain" id="PRO_1000079459" description="Small ribosomal subunit protein bS6">
    <location>
        <begin position="1"/>
        <end position="141"/>
    </location>
</feature>
<feature type="region of interest" description="Disordered" evidence="2">
    <location>
        <begin position="96"/>
        <end position="141"/>
    </location>
</feature>
<feature type="compositionally biased region" description="Basic and acidic residues" evidence="2">
    <location>
        <begin position="103"/>
        <end position="124"/>
    </location>
</feature>
<feature type="compositionally biased region" description="Acidic residues" evidence="2">
    <location>
        <begin position="125"/>
        <end position="141"/>
    </location>
</feature>
<protein>
    <recommendedName>
        <fullName evidence="1">Small ribosomal subunit protein bS6</fullName>
    </recommendedName>
    <alternativeName>
        <fullName evidence="3">30S ribosomal protein S6</fullName>
    </alternativeName>
</protein>
<comment type="function">
    <text evidence="1">Binds together with bS18 to 16S ribosomal RNA.</text>
</comment>
<comment type="similarity">
    <text evidence="1">Belongs to the bacterial ribosomal protein bS6 family.</text>
</comment>
<organism>
    <name type="scientific">Pseudomonas putida (strain GB-1)</name>
    <dbReference type="NCBI Taxonomy" id="76869"/>
    <lineage>
        <taxon>Bacteria</taxon>
        <taxon>Pseudomonadati</taxon>
        <taxon>Pseudomonadota</taxon>
        <taxon>Gammaproteobacteria</taxon>
        <taxon>Pseudomonadales</taxon>
        <taxon>Pseudomonadaceae</taxon>
        <taxon>Pseudomonas</taxon>
    </lineage>
</organism>
<reference key="1">
    <citation type="submission" date="2008-01" db="EMBL/GenBank/DDBJ databases">
        <title>Complete sequence of Pseudomonas putida GB-1.</title>
        <authorList>
            <consortium name="US DOE Joint Genome Institute"/>
            <person name="Copeland A."/>
            <person name="Lucas S."/>
            <person name="Lapidus A."/>
            <person name="Barry K."/>
            <person name="Glavina del Rio T."/>
            <person name="Dalin E."/>
            <person name="Tice H."/>
            <person name="Pitluck S."/>
            <person name="Bruce D."/>
            <person name="Goodwin L."/>
            <person name="Chertkov O."/>
            <person name="Brettin T."/>
            <person name="Detter J.C."/>
            <person name="Han C."/>
            <person name="Kuske C.R."/>
            <person name="Schmutz J."/>
            <person name="Larimer F."/>
            <person name="Land M."/>
            <person name="Hauser L."/>
            <person name="Kyrpides N."/>
            <person name="Kim E."/>
            <person name="McCarthy J.K."/>
            <person name="Richardson P."/>
        </authorList>
    </citation>
    <scope>NUCLEOTIDE SEQUENCE [LARGE SCALE GENOMIC DNA]</scope>
    <source>
        <strain>GB-1</strain>
    </source>
</reference>